<evidence type="ECO:0000255" key="1">
    <source>
        <dbReference type="HAMAP-Rule" id="MF_00387"/>
    </source>
</evidence>
<name>LPXA_SHIFL</name>
<feature type="chain" id="PRO_0000188069" description="Acyl-[acyl-carrier-protein]--UDP-N-acetylglucosamine O-acyltransferase">
    <location>
        <begin position="1"/>
        <end position="262"/>
    </location>
</feature>
<dbReference type="EC" id="2.3.1.129" evidence="1"/>
<dbReference type="EMBL" id="AE005674">
    <property type="protein sequence ID" value="AAN41833.1"/>
    <property type="molecule type" value="Genomic_DNA"/>
</dbReference>
<dbReference type="EMBL" id="AE014073">
    <property type="protein sequence ID" value="AAP15714.1"/>
    <property type="molecule type" value="Genomic_DNA"/>
</dbReference>
<dbReference type="RefSeq" id="NP_706126.1">
    <property type="nucleotide sequence ID" value="NC_004337.2"/>
</dbReference>
<dbReference type="RefSeq" id="WP_000565966.1">
    <property type="nucleotide sequence ID" value="NZ_WPGW01000006.1"/>
</dbReference>
<dbReference type="SMR" id="P0A724"/>
<dbReference type="STRING" id="198214.SF0171"/>
<dbReference type="PaxDb" id="198214-SF0171"/>
<dbReference type="GeneID" id="1027519"/>
<dbReference type="GeneID" id="93777244"/>
<dbReference type="KEGG" id="sfl:SF0171"/>
<dbReference type="KEGG" id="sfx:S0174"/>
<dbReference type="PATRIC" id="fig|198214.7.peg.193"/>
<dbReference type="HOGENOM" id="CLU_061249_0_0_6"/>
<dbReference type="UniPathway" id="UPA00359">
    <property type="reaction ID" value="UER00477"/>
</dbReference>
<dbReference type="Proteomes" id="UP000001006">
    <property type="component" value="Chromosome"/>
</dbReference>
<dbReference type="Proteomes" id="UP000002673">
    <property type="component" value="Chromosome"/>
</dbReference>
<dbReference type="GO" id="GO:0005737">
    <property type="term" value="C:cytoplasm"/>
    <property type="evidence" value="ECO:0007669"/>
    <property type="project" value="UniProtKB-SubCell"/>
</dbReference>
<dbReference type="GO" id="GO:0016020">
    <property type="term" value="C:membrane"/>
    <property type="evidence" value="ECO:0007669"/>
    <property type="project" value="GOC"/>
</dbReference>
<dbReference type="GO" id="GO:0008780">
    <property type="term" value="F:acyl-[acyl-carrier-protein]-UDP-N-acetylglucosamine O-acyltransferase activity"/>
    <property type="evidence" value="ECO:0007669"/>
    <property type="project" value="UniProtKB-UniRule"/>
</dbReference>
<dbReference type="GO" id="GO:0009245">
    <property type="term" value="P:lipid A biosynthetic process"/>
    <property type="evidence" value="ECO:0007669"/>
    <property type="project" value="UniProtKB-UniRule"/>
</dbReference>
<dbReference type="CDD" id="cd03351">
    <property type="entry name" value="LbH_UDP-GlcNAc_AT"/>
    <property type="match status" value="1"/>
</dbReference>
<dbReference type="FunFam" id="1.20.1180.10:FF:000001">
    <property type="entry name" value="Acyl-[acyl-carrier-protein]--UDP-N-acetylglucosamine O-acyltransferase"/>
    <property type="match status" value="1"/>
</dbReference>
<dbReference type="FunFam" id="2.160.10.10:FF:000003">
    <property type="entry name" value="Acyl-[acyl-carrier-protein]--UDP-N-acetylglucosamine O-acyltransferase"/>
    <property type="match status" value="1"/>
</dbReference>
<dbReference type="Gene3D" id="2.160.10.10">
    <property type="entry name" value="Hexapeptide repeat proteins"/>
    <property type="match status" value="1"/>
</dbReference>
<dbReference type="Gene3D" id="1.20.1180.10">
    <property type="entry name" value="Udp N-acetylglucosamine O-acyltransferase, C-terminal domain"/>
    <property type="match status" value="1"/>
</dbReference>
<dbReference type="HAMAP" id="MF_00387">
    <property type="entry name" value="LpxA"/>
    <property type="match status" value="1"/>
</dbReference>
<dbReference type="InterPro" id="IPR029098">
    <property type="entry name" value="Acetyltransf_C"/>
</dbReference>
<dbReference type="InterPro" id="IPR037157">
    <property type="entry name" value="Acetyltransf_C_sf"/>
</dbReference>
<dbReference type="InterPro" id="IPR001451">
    <property type="entry name" value="Hexapep"/>
</dbReference>
<dbReference type="InterPro" id="IPR018357">
    <property type="entry name" value="Hexapep_transf_CS"/>
</dbReference>
<dbReference type="InterPro" id="IPR010137">
    <property type="entry name" value="Lipid_A_LpxA"/>
</dbReference>
<dbReference type="InterPro" id="IPR011004">
    <property type="entry name" value="Trimer_LpxA-like_sf"/>
</dbReference>
<dbReference type="NCBIfam" id="TIGR01852">
    <property type="entry name" value="lipid_A_lpxA"/>
    <property type="match status" value="1"/>
</dbReference>
<dbReference type="NCBIfam" id="NF003657">
    <property type="entry name" value="PRK05289.1"/>
    <property type="match status" value="1"/>
</dbReference>
<dbReference type="PANTHER" id="PTHR43480">
    <property type="entry name" value="ACYL-[ACYL-CARRIER-PROTEIN]--UDP-N-ACETYLGLUCOSAMINE O-ACYLTRANSFERASE"/>
    <property type="match status" value="1"/>
</dbReference>
<dbReference type="PANTHER" id="PTHR43480:SF1">
    <property type="entry name" value="ACYL-[ACYL-CARRIER-PROTEIN]--UDP-N-ACETYLGLUCOSAMINE O-ACYLTRANSFERASE, MITOCHONDRIAL-RELATED"/>
    <property type="match status" value="1"/>
</dbReference>
<dbReference type="Pfam" id="PF13720">
    <property type="entry name" value="Acetyltransf_11"/>
    <property type="match status" value="1"/>
</dbReference>
<dbReference type="Pfam" id="PF00132">
    <property type="entry name" value="Hexapep"/>
    <property type="match status" value="2"/>
</dbReference>
<dbReference type="PIRSF" id="PIRSF000456">
    <property type="entry name" value="UDP-GlcNAc_acltr"/>
    <property type="match status" value="1"/>
</dbReference>
<dbReference type="SUPFAM" id="SSF51161">
    <property type="entry name" value="Trimeric LpxA-like enzymes"/>
    <property type="match status" value="1"/>
</dbReference>
<dbReference type="PROSITE" id="PS00101">
    <property type="entry name" value="HEXAPEP_TRANSFERASES"/>
    <property type="match status" value="2"/>
</dbReference>
<sequence>MIDKSAFVHPTAIVEEGASIGANAHIGPFCIVGPHVEIGEGTVLKSHVVVNGHTKIGRDNEIYQFASIGEVNQDLKYAGEPTRVEIGDRNRIRESVTIHRGTVQGGGLTKVGSDNLLMINAHIAHDCTVGNRCILANNATLAGHVSVDDFAIIGGMTAVHQFCIIGAHVMVGGCSGVAQDVPPYVIAQGNHATPFGVNIEGLKRRGFSREAITAIRNAYKLIYRSGKTLDEVKPEIAELAETYPEVKAFTDFFARSTRGLIR</sequence>
<keyword id="KW-0012">Acyltransferase</keyword>
<keyword id="KW-0963">Cytoplasm</keyword>
<keyword id="KW-0441">Lipid A biosynthesis</keyword>
<keyword id="KW-0444">Lipid biosynthesis</keyword>
<keyword id="KW-0443">Lipid metabolism</keyword>
<keyword id="KW-1185">Reference proteome</keyword>
<keyword id="KW-0677">Repeat</keyword>
<keyword id="KW-0808">Transferase</keyword>
<proteinExistence type="inferred from homology"/>
<organism>
    <name type="scientific">Shigella flexneri</name>
    <dbReference type="NCBI Taxonomy" id="623"/>
    <lineage>
        <taxon>Bacteria</taxon>
        <taxon>Pseudomonadati</taxon>
        <taxon>Pseudomonadota</taxon>
        <taxon>Gammaproteobacteria</taxon>
        <taxon>Enterobacterales</taxon>
        <taxon>Enterobacteriaceae</taxon>
        <taxon>Shigella</taxon>
    </lineage>
</organism>
<protein>
    <recommendedName>
        <fullName evidence="1">Acyl-[acyl-carrier-protein]--UDP-N-acetylglucosamine O-acyltransferase</fullName>
        <shortName evidence="1">UDP-N-acetylglucosamine acyltransferase</shortName>
        <ecNumber evidence="1">2.3.1.129</ecNumber>
    </recommendedName>
</protein>
<gene>
    <name evidence="1" type="primary">lpxA</name>
    <name type="ordered locus">SF0171</name>
    <name type="ordered locus">S0174</name>
</gene>
<reference key="1">
    <citation type="journal article" date="2002" name="Nucleic Acids Res.">
        <title>Genome sequence of Shigella flexneri 2a: insights into pathogenicity through comparison with genomes of Escherichia coli K12 and O157.</title>
        <authorList>
            <person name="Jin Q."/>
            <person name="Yuan Z."/>
            <person name="Xu J."/>
            <person name="Wang Y."/>
            <person name="Shen Y."/>
            <person name="Lu W."/>
            <person name="Wang J."/>
            <person name="Liu H."/>
            <person name="Yang J."/>
            <person name="Yang F."/>
            <person name="Zhang X."/>
            <person name="Zhang J."/>
            <person name="Yang G."/>
            <person name="Wu H."/>
            <person name="Qu D."/>
            <person name="Dong J."/>
            <person name="Sun L."/>
            <person name="Xue Y."/>
            <person name="Zhao A."/>
            <person name="Gao Y."/>
            <person name="Zhu J."/>
            <person name="Kan B."/>
            <person name="Ding K."/>
            <person name="Chen S."/>
            <person name="Cheng H."/>
            <person name="Yao Z."/>
            <person name="He B."/>
            <person name="Chen R."/>
            <person name="Ma D."/>
            <person name="Qiang B."/>
            <person name="Wen Y."/>
            <person name="Hou Y."/>
            <person name="Yu J."/>
        </authorList>
    </citation>
    <scope>NUCLEOTIDE SEQUENCE [LARGE SCALE GENOMIC DNA]</scope>
    <source>
        <strain>301 / Serotype 2a</strain>
    </source>
</reference>
<reference key="2">
    <citation type="journal article" date="2003" name="Infect. Immun.">
        <title>Complete genome sequence and comparative genomics of Shigella flexneri serotype 2a strain 2457T.</title>
        <authorList>
            <person name="Wei J."/>
            <person name="Goldberg M.B."/>
            <person name="Burland V."/>
            <person name="Venkatesan M.M."/>
            <person name="Deng W."/>
            <person name="Fournier G."/>
            <person name="Mayhew G.F."/>
            <person name="Plunkett G. III"/>
            <person name="Rose D.J."/>
            <person name="Darling A."/>
            <person name="Mau B."/>
            <person name="Perna N.T."/>
            <person name="Payne S.M."/>
            <person name="Runyen-Janecky L.J."/>
            <person name="Zhou S."/>
            <person name="Schwartz D.C."/>
            <person name="Blattner F.R."/>
        </authorList>
    </citation>
    <scope>NUCLEOTIDE SEQUENCE [LARGE SCALE GENOMIC DNA]</scope>
    <source>
        <strain>ATCC 700930 / 2457T / Serotype 2a</strain>
    </source>
</reference>
<accession>P0A724</accession>
<accession>P10440</accession>
<accession>P78243</accession>
<comment type="function">
    <text evidence="1">Involved in the biosynthesis of lipid A, a phosphorylated glycolipid that anchors the lipopolysaccharide to the outer membrane of the cell.</text>
</comment>
<comment type="catalytic activity">
    <reaction evidence="1">
        <text>a (3R)-hydroxyacyl-[ACP] + UDP-N-acetyl-alpha-D-glucosamine = a UDP-3-O-[(3R)-3-hydroxyacyl]-N-acetyl-alpha-D-glucosamine + holo-[ACP]</text>
        <dbReference type="Rhea" id="RHEA:67812"/>
        <dbReference type="Rhea" id="RHEA-COMP:9685"/>
        <dbReference type="Rhea" id="RHEA-COMP:9945"/>
        <dbReference type="ChEBI" id="CHEBI:57705"/>
        <dbReference type="ChEBI" id="CHEBI:64479"/>
        <dbReference type="ChEBI" id="CHEBI:78827"/>
        <dbReference type="ChEBI" id="CHEBI:173225"/>
        <dbReference type="EC" id="2.3.1.129"/>
    </reaction>
</comment>
<comment type="pathway">
    <text evidence="1">Glycolipid biosynthesis; lipid IV(A) biosynthesis; lipid IV(A) from (3R)-3-hydroxytetradecanoyl-[acyl-carrier-protein] and UDP-N-acetyl-alpha-D-glucosamine: step 1/6.</text>
</comment>
<comment type="subunit">
    <text evidence="1">Homotrimer.</text>
</comment>
<comment type="subcellular location">
    <subcellularLocation>
        <location evidence="1">Cytoplasm</location>
    </subcellularLocation>
</comment>
<comment type="similarity">
    <text evidence="1">Belongs to the transferase hexapeptide repeat family. LpxA subfamily.</text>
</comment>